<reference key="1">
    <citation type="journal article" date="1999" name="Dev. Biol.">
        <title>Chamber-specific cardiac expression of Tbx5 and heart defects in Holt-Oram syndrome.</title>
        <authorList>
            <person name="Bruneau B.G."/>
            <person name="Logan M."/>
            <person name="Davis N."/>
            <person name="Levi T."/>
            <person name="Tabin C.J."/>
            <person name="Seidman J.G."/>
            <person name="Seidman C.E."/>
        </authorList>
    </citation>
    <scope>NUCLEOTIDE SEQUENCE [MRNA]</scope>
    <source>
        <tissue>Limb</tissue>
    </source>
</reference>
<reference key="2">
    <citation type="journal article" date="1996" name="Genetics">
        <title>Evolution of mouse T-box genes by tandem duplication and cluster dispersion.</title>
        <authorList>
            <person name="Agulnik S.I."/>
            <person name="Garvey N."/>
            <person name="Hancock S."/>
            <person name="Ruvinsky I."/>
            <person name="Chapman D.L."/>
            <person name="Agulnik I."/>
            <person name="Bollag R.J."/>
            <person name="Papaioannou V.E."/>
            <person name="Silver L.M."/>
        </authorList>
    </citation>
    <scope>NUCLEOTIDE SEQUENCE [MRNA] OF 63-246</scope>
    <source>
        <tissue>Embryo</tissue>
    </source>
</reference>
<reference key="3">
    <citation type="journal article" date="1996" name="Dev. Dyn.">
        <title>Expression of the T-box family genes, Tbx1-Tbx5, during early mouse development.</title>
        <authorList>
            <person name="Chapman D.L."/>
            <person name="Garvey N."/>
            <person name="Hancock S."/>
            <person name="Alexiou M."/>
            <person name="Agulnik S.I."/>
            <person name="Gibson-Brown J.J."/>
            <person name="Cebra-Thomas J."/>
            <person name="Bollag R.J."/>
            <person name="Silver L.M."/>
            <person name="Papaioannou V.E."/>
        </authorList>
    </citation>
    <scope>DEVELOPMENTAL STAGE</scope>
</reference>
<name>TBX5_MOUSE</name>
<evidence type="ECO:0000250" key="1">
    <source>
        <dbReference type="UniProtKB" id="Q99593"/>
    </source>
</evidence>
<evidence type="ECO:0000255" key="2">
    <source>
        <dbReference type="PROSITE-ProRule" id="PRU00201"/>
    </source>
</evidence>
<evidence type="ECO:0000256" key="3">
    <source>
        <dbReference type="SAM" id="MobiDB-lite"/>
    </source>
</evidence>
<evidence type="ECO:0000269" key="4">
    <source>
    </source>
</evidence>
<evidence type="ECO:0000305" key="5"/>
<evidence type="ECO:0007829" key="6">
    <source>
        <dbReference type="PDB" id="5FLV"/>
    </source>
</evidence>
<gene>
    <name type="primary">Tbx5</name>
</gene>
<accession>P70326</accession>
<accession>Q9R003</accession>
<feature type="chain" id="PRO_0000184436" description="T-box transcription factor TBX5">
    <location>
        <begin position="1"/>
        <end position="518"/>
    </location>
</feature>
<feature type="DNA-binding region" description="T-box" evidence="1 2">
    <location>
        <begin position="58"/>
        <end position="238"/>
    </location>
</feature>
<feature type="region of interest" description="Disordered" evidence="3">
    <location>
        <begin position="1"/>
        <end position="46"/>
    </location>
</feature>
<feature type="region of interest" description="Disordered" evidence="3">
    <location>
        <begin position="254"/>
        <end position="307"/>
    </location>
</feature>
<feature type="region of interest" description="Disordered" evidence="3">
    <location>
        <begin position="330"/>
        <end position="352"/>
    </location>
</feature>
<feature type="compositionally biased region" description="Basic and acidic residues" evidence="3">
    <location>
        <begin position="15"/>
        <end position="28"/>
    </location>
</feature>
<feature type="compositionally biased region" description="Low complexity" evidence="3">
    <location>
        <begin position="34"/>
        <end position="45"/>
    </location>
</feature>
<feature type="compositionally biased region" description="Polar residues" evidence="3">
    <location>
        <begin position="269"/>
        <end position="301"/>
    </location>
</feature>
<feature type="modified residue" description="N6-acetyllysine" evidence="1">
    <location>
        <position position="339"/>
    </location>
</feature>
<feature type="sequence conflict" description="In Ref. 2; AAC53109." evidence="5" ref="2">
    <original>HEVG</original>
    <variation>RSGV</variation>
    <location>
        <begin position="68"/>
        <end position="71"/>
    </location>
</feature>
<feature type="sequence conflict" description="In Ref. 2; AAC53109." evidence="5" ref="2">
    <original>R</original>
    <variation>G</variation>
    <location>
        <position position="81"/>
    </location>
</feature>
<feature type="strand" evidence="6">
    <location>
        <begin position="55"/>
        <end position="58"/>
    </location>
</feature>
<feature type="helix" evidence="6">
    <location>
        <begin position="61"/>
        <end position="68"/>
    </location>
</feature>
<feature type="strand" evidence="6">
    <location>
        <begin position="73"/>
        <end position="75"/>
    </location>
</feature>
<feature type="strand" evidence="6">
    <location>
        <begin position="77"/>
        <end position="79"/>
    </location>
</feature>
<feature type="strand" evidence="6">
    <location>
        <begin position="88"/>
        <end position="93"/>
    </location>
</feature>
<feature type="strand" evidence="6">
    <location>
        <begin position="96"/>
        <end position="116"/>
    </location>
</feature>
<feature type="strand" evidence="6">
    <location>
        <begin position="121"/>
        <end position="126"/>
    </location>
</feature>
<feature type="strand" evidence="6">
    <location>
        <begin position="142"/>
        <end position="144"/>
    </location>
</feature>
<feature type="helix" evidence="6">
    <location>
        <begin position="145"/>
        <end position="150"/>
    </location>
</feature>
<feature type="strand" evidence="6">
    <location>
        <begin position="159"/>
        <end position="161"/>
    </location>
</feature>
<feature type="strand" evidence="6">
    <location>
        <begin position="177"/>
        <end position="187"/>
    </location>
</feature>
<feature type="strand" evidence="6">
    <location>
        <begin position="203"/>
        <end position="205"/>
    </location>
</feature>
<feature type="helix" evidence="6">
    <location>
        <begin position="207"/>
        <end position="209"/>
    </location>
</feature>
<feature type="strand" evidence="6">
    <location>
        <begin position="211"/>
        <end position="216"/>
    </location>
</feature>
<feature type="helix" evidence="6">
    <location>
        <begin position="220"/>
        <end position="227"/>
    </location>
</feature>
<feature type="helix" evidence="6">
    <location>
        <begin position="231"/>
        <end position="236"/>
    </location>
</feature>
<dbReference type="EMBL" id="AF140427">
    <property type="protein sequence ID" value="AAF00112.1"/>
    <property type="molecule type" value="mRNA"/>
</dbReference>
<dbReference type="EMBL" id="U57330">
    <property type="protein sequence ID" value="AAC53109.1"/>
    <property type="molecule type" value="mRNA"/>
</dbReference>
<dbReference type="CCDS" id="CCDS19615.1"/>
<dbReference type="PIR" id="S72231">
    <property type="entry name" value="S72231"/>
</dbReference>
<dbReference type="RefSeq" id="NP_035667.1">
    <property type="nucleotide sequence ID" value="NM_011537.3"/>
</dbReference>
<dbReference type="RefSeq" id="XP_006530343.1">
    <property type="nucleotide sequence ID" value="XM_006530280.1"/>
</dbReference>
<dbReference type="RefSeq" id="XP_006530344.1">
    <property type="nucleotide sequence ID" value="XM_006530281.3"/>
</dbReference>
<dbReference type="RefSeq" id="XP_006530345.1">
    <property type="nucleotide sequence ID" value="XM_006530282.5"/>
</dbReference>
<dbReference type="RefSeq" id="XP_006530346.1">
    <property type="nucleotide sequence ID" value="XM_006530283.3"/>
</dbReference>
<dbReference type="RefSeq" id="XP_011246493.1">
    <property type="nucleotide sequence ID" value="XM_011248191.4"/>
</dbReference>
<dbReference type="RefSeq" id="XP_017176276.1">
    <property type="nucleotide sequence ID" value="XM_017320787.1"/>
</dbReference>
<dbReference type="PDB" id="5FLV">
    <property type="method" value="X-ray"/>
    <property type="resolution" value="3.00 A"/>
    <property type="chains" value="A/E/I/M=51-251"/>
</dbReference>
<dbReference type="PDBsum" id="5FLV"/>
<dbReference type="SMR" id="P70326"/>
<dbReference type="BioGRID" id="203990">
    <property type="interactions" value="6"/>
</dbReference>
<dbReference type="DIP" id="DIP-48887N"/>
<dbReference type="FunCoup" id="P70326">
    <property type="interactions" value="306"/>
</dbReference>
<dbReference type="IntAct" id="P70326">
    <property type="interactions" value="64"/>
</dbReference>
<dbReference type="STRING" id="10090.ENSMUSP00000018407"/>
<dbReference type="iPTMnet" id="P70326"/>
<dbReference type="PhosphoSitePlus" id="P70326"/>
<dbReference type="PaxDb" id="10090-ENSMUSP00000018407"/>
<dbReference type="ProteomicsDB" id="254673"/>
<dbReference type="Antibodypedia" id="18791">
    <property type="antibodies" value="277 antibodies from 34 providers"/>
</dbReference>
<dbReference type="DNASU" id="21388"/>
<dbReference type="Ensembl" id="ENSMUST00000018407.10">
    <property type="protein sequence ID" value="ENSMUSP00000018407.7"/>
    <property type="gene ID" value="ENSMUSG00000018263.12"/>
</dbReference>
<dbReference type="GeneID" id="21388"/>
<dbReference type="KEGG" id="mmu:21388"/>
<dbReference type="UCSC" id="uc008zgz.2">
    <property type="organism name" value="mouse"/>
</dbReference>
<dbReference type="AGR" id="MGI:102541"/>
<dbReference type="CTD" id="6910"/>
<dbReference type="MGI" id="MGI:102541">
    <property type="gene designation" value="Tbx5"/>
</dbReference>
<dbReference type="VEuPathDB" id="HostDB:ENSMUSG00000018263"/>
<dbReference type="eggNOG" id="KOG3585">
    <property type="taxonomic scope" value="Eukaryota"/>
</dbReference>
<dbReference type="GeneTree" id="ENSGT00940000156506"/>
<dbReference type="HOGENOM" id="CLU_037025_1_0_1"/>
<dbReference type="InParanoid" id="P70326"/>
<dbReference type="OMA" id="CMYASSV"/>
<dbReference type="OrthoDB" id="7442607at2759"/>
<dbReference type="PhylomeDB" id="P70326"/>
<dbReference type="TreeFam" id="TF106341"/>
<dbReference type="Reactome" id="R-MMU-2032785">
    <property type="pathway name" value="YAP1- and WWTR1 (TAZ)-stimulated gene expression"/>
</dbReference>
<dbReference type="BioGRID-ORCS" id="21388">
    <property type="hits" value="2 hits in 81 CRISPR screens"/>
</dbReference>
<dbReference type="PRO" id="PR:P70326"/>
<dbReference type="Proteomes" id="UP000000589">
    <property type="component" value="Chromosome 5"/>
</dbReference>
<dbReference type="RNAct" id="P70326">
    <property type="molecule type" value="protein"/>
</dbReference>
<dbReference type="Bgee" id="ENSMUSG00000018263">
    <property type="expression patterns" value="Expressed in cardiogenic plate and 94 other cell types or tissues"/>
</dbReference>
<dbReference type="ExpressionAtlas" id="P70326">
    <property type="expression patterns" value="baseline and differential"/>
</dbReference>
<dbReference type="GO" id="GO:0005737">
    <property type="term" value="C:cytoplasm"/>
    <property type="evidence" value="ECO:0000250"/>
    <property type="project" value="UniProtKB"/>
</dbReference>
<dbReference type="GO" id="GO:0005654">
    <property type="term" value="C:nucleoplasm"/>
    <property type="evidence" value="ECO:0000304"/>
    <property type="project" value="Reactome"/>
</dbReference>
<dbReference type="GO" id="GO:0005634">
    <property type="term" value="C:nucleus"/>
    <property type="evidence" value="ECO:0000314"/>
    <property type="project" value="BHF-UCL"/>
</dbReference>
<dbReference type="GO" id="GO:0032991">
    <property type="term" value="C:protein-containing complex"/>
    <property type="evidence" value="ECO:0000250"/>
    <property type="project" value="UniProtKB"/>
</dbReference>
<dbReference type="GO" id="GO:0032993">
    <property type="term" value="C:protein-DNA complex"/>
    <property type="evidence" value="ECO:0000250"/>
    <property type="project" value="UniProtKB"/>
</dbReference>
<dbReference type="GO" id="GO:0005667">
    <property type="term" value="C:transcription regulator complex"/>
    <property type="evidence" value="ECO:0000353"/>
    <property type="project" value="MGI"/>
</dbReference>
<dbReference type="GO" id="GO:0003677">
    <property type="term" value="F:DNA binding"/>
    <property type="evidence" value="ECO:0000314"/>
    <property type="project" value="MGI"/>
</dbReference>
<dbReference type="GO" id="GO:0001228">
    <property type="term" value="F:DNA-binding transcription activator activity, RNA polymerase II-specific"/>
    <property type="evidence" value="ECO:0000314"/>
    <property type="project" value="BHF-UCL"/>
</dbReference>
<dbReference type="GO" id="GO:0003700">
    <property type="term" value="F:DNA-binding transcription factor activity"/>
    <property type="evidence" value="ECO:0000314"/>
    <property type="project" value="MGI"/>
</dbReference>
<dbReference type="GO" id="GO:0000981">
    <property type="term" value="F:DNA-binding transcription factor activity, RNA polymerase II-specific"/>
    <property type="evidence" value="ECO:0000250"/>
    <property type="project" value="UniProtKB"/>
</dbReference>
<dbReference type="GO" id="GO:0000978">
    <property type="term" value="F:RNA polymerase II cis-regulatory region sequence-specific DNA binding"/>
    <property type="evidence" value="ECO:0000314"/>
    <property type="project" value="BHF-UCL"/>
</dbReference>
<dbReference type="GO" id="GO:0000977">
    <property type="term" value="F:RNA polymerase II transcription regulatory region sequence-specific DNA binding"/>
    <property type="evidence" value="ECO:0000314"/>
    <property type="project" value="BHF-UCL"/>
</dbReference>
<dbReference type="GO" id="GO:0061629">
    <property type="term" value="F:RNA polymerase II-specific DNA-binding transcription factor binding"/>
    <property type="evidence" value="ECO:0007669"/>
    <property type="project" value="Ensembl"/>
</dbReference>
<dbReference type="GO" id="GO:0043565">
    <property type="term" value="F:sequence-specific DNA binding"/>
    <property type="evidence" value="ECO:0000250"/>
    <property type="project" value="UniProtKB"/>
</dbReference>
<dbReference type="GO" id="GO:0048513">
    <property type="term" value="P:animal organ development"/>
    <property type="evidence" value="ECO:0000250"/>
    <property type="project" value="UniProtKB"/>
</dbReference>
<dbReference type="GO" id="GO:0003283">
    <property type="term" value="P:atrial septum development"/>
    <property type="evidence" value="ECO:0000315"/>
    <property type="project" value="MGI"/>
</dbReference>
<dbReference type="GO" id="GO:0060413">
    <property type="term" value="P:atrial septum morphogenesis"/>
    <property type="evidence" value="ECO:0000316"/>
    <property type="project" value="MGI"/>
</dbReference>
<dbReference type="GO" id="GO:0003167">
    <property type="term" value="P:atrioventricular bundle cell differentiation"/>
    <property type="evidence" value="ECO:0000315"/>
    <property type="project" value="BHF-UCL"/>
</dbReference>
<dbReference type="GO" id="GO:0060928">
    <property type="term" value="P:atrioventricular node cell development"/>
    <property type="evidence" value="ECO:0000315"/>
    <property type="project" value="BHF-UCL"/>
</dbReference>
<dbReference type="GO" id="GO:0060929">
    <property type="term" value="P:atrioventricular node cell fate commitment"/>
    <property type="evidence" value="ECO:0000315"/>
    <property type="project" value="BHF-UCL"/>
</dbReference>
<dbReference type="GO" id="GO:0003181">
    <property type="term" value="P:atrioventricular valve morphogenesis"/>
    <property type="evidence" value="ECO:0000316"/>
    <property type="project" value="MGI"/>
</dbReference>
<dbReference type="GO" id="GO:0086054">
    <property type="term" value="P:bundle of His cell to Purkinje myocyte communication by electrical coupling"/>
    <property type="evidence" value="ECO:0000315"/>
    <property type="project" value="BHF-UCL"/>
</dbReference>
<dbReference type="GO" id="GO:0003166">
    <property type="term" value="P:bundle of His development"/>
    <property type="evidence" value="ECO:0000315"/>
    <property type="project" value="BHF-UCL"/>
</dbReference>
<dbReference type="GO" id="GO:0003218">
    <property type="term" value="P:cardiac left ventricle formation"/>
    <property type="evidence" value="ECO:0000315"/>
    <property type="project" value="BHF-UCL"/>
</dbReference>
<dbReference type="GO" id="GO:0055007">
    <property type="term" value="P:cardiac muscle cell differentiation"/>
    <property type="evidence" value="ECO:0000315"/>
    <property type="project" value="BHF-UCL"/>
</dbReference>
<dbReference type="GO" id="GO:0060038">
    <property type="term" value="P:cardiac muscle cell proliferation"/>
    <property type="evidence" value="ECO:0000316"/>
    <property type="project" value="MGI"/>
</dbReference>
<dbReference type="GO" id="GO:0007267">
    <property type="term" value="P:cell-cell signaling"/>
    <property type="evidence" value="ECO:0000316"/>
    <property type="project" value="BHF-UCL"/>
</dbReference>
<dbReference type="GO" id="GO:0035115">
    <property type="term" value="P:embryonic forelimb morphogenesis"/>
    <property type="evidence" value="ECO:0000315"/>
    <property type="project" value="MGI"/>
</dbReference>
<dbReference type="GO" id="GO:0030326">
    <property type="term" value="P:embryonic limb morphogenesis"/>
    <property type="evidence" value="ECO:0000315"/>
    <property type="project" value="MGI"/>
</dbReference>
<dbReference type="GO" id="GO:0003197">
    <property type="term" value="P:endocardial cushion development"/>
    <property type="evidence" value="ECO:0000316"/>
    <property type="project" value="MGI"/>
</dbReference>
<dbReference type="GO" id="GO:0035136">
    <property type="term" value="P:forelimb morphogenesis"/>
    <property type="evidence" value="ECO:0000315"/>
    <property type="project" value="MGI"/>
</dbReference>
<dbReference type="GO" id="GO:0007507">
    <property type="term" value="P:heart development"/>
    <property type="evidence" value="ECO:0000315"/>
    <property type="project" value="MGI"/>
</dbReference>
<dbReference type="GO" id="GO:0030324">
    <property type="term" value="P:lung development"/>
    <property type="evidence" value="ECO:0000315"/>
    <property type="project" value="MGI"/>
</dbReference>
<dbReference type="GO" id="GO:0002009">
    <property type="term" value="P:morphogenesis of an epithelium"/>
    <property type="evidence" value="ECO:0000315"/>
    <property type="project" value="MGI"/>
</dbReference>
<dbReference type="GO" id="GO:0060044">
    <property type="term" value="P:negative regulation of cardiac muscle cell proliferation"/>
    <property type="evidence" value="ECO:0000250"/>
    <property type="project" value="UniProtKB"/>
</dbReference>
<dbReference type="GO" id="GO:0030336">
    <property type="term" value="P:negative regulation of cell migration"/>
    <property type="evidence" value="ECO:0000250"/>
    <property type="project" value="UniProtKB"/>
</dbReference>
<dbReference type="GO" id="GO:0008285">
    <property type="term" value="P:negative regulation of cell population proliferation"/>
    <property type="evidence" value="ECO:0000250"/>
    <property type="project" value="UniProtKB"/>
</dbReference>
<dbReference type="GO" id="GO:0007389">
    <property type="term" value="P:pattern specification process"/>
    <property type="evidence" value="ECO:0000315"/>
    <property type="project" value="MGI"/>
</dbReference>
<dbReference type="GO" id="GO:0060039">
    <property type="term" value="P:pericardium development"/>
    <property type="evidence" value="ECO:0000250"/>
    <property type="project" value="UniProtKB"/>
</dbReference>
<dbReference type="GO" id="GO:1903781">
    <property type="term" value="P:positive regulation of cardiac conduction"/>
    <property type="evidence" value="ECO:0000315"/>
    <property type="project" value="BHF-UCL"/>
</dbReference>
<dbReference type="GO" id="GO:0060045">
    <property type="term" value="P:positive regulation of cardiac muscle cell proliferation"/>
    <property type="evidence" value="ECO:0000316"/>
    <property type="project" value="MGI"/>
</dbReference>
<dbReference type="GO" id="GO:0051891">
    <property type="term" value="P:positive regulation of cardioblast differentiation"/>
    <property type="evidence" value="ECO:0000250"/>
    <property type="project" value="UniProtKB"/>
</dbReference>
<dbReference type="GO" id="GO:0045893">
    <property type="term" value="P:positive regulation of DNA-templated transcription"/>
    <property type="evidence" value="ECO:0000314"/>
    <property type="project" value="MGI"/>
</dbReference>
<dbReference type="GO" id="GO:1903598">
    <property type="term" value="P:positive regulation of gap junction assembly"/>
    <property type="evidence" value="ECO:0000315"/>
    <property type="project" value="BHF-UCL"/>
</dbReference>
<dbReference type="GO" id="GO:0072513">
    <property type="term" value="P:positive regulation of secondary heart field cardioblast proliferation"/>
    <property type="evidence" value="ECO:0000315"/>
    <property type="project" value="MGI"/>
</dbReference>
<dbReference type="GO" id="GO:0045944">
    <property type="term" value="P:positive regulation of transcription by RNA polymerase II"/>
    <property type="evidence" value="ECO:0000314"/>
    <property type="project" value="BHF-UCL"/>
</dbReference>
<dbReference type="GO" id="GO:0060371">
    <property type="term" value="P:regulation of atrial cardiac muscle cell membrane depolarization"/>
    <property type="evidence" value="ECO:0000316"/>
    <property type="project" value="BHF-UCL"/>
</dbReference>
<dbReference type="GO" id="GO:0006355">
    <property type="term" value="P:regulation of DNA-templated transcription"/>
    <property type="evidence" value="ECO:0000315"/>
    <property type="project" value="MGI"/>
</dbReference>
<dbReference type="GO" id="GO:0003163">
    <property type="term" value="P:sinoatrial node development"/>
    <property type="evidence" value="ECO:0000315"/>
    <property type="project" value="BHF-UCL"/>
</dbReference>
<dbReference type="GO" id="GO:0006366">
    <property type="term" value="P:transcription by RNA polymerase II"/>
    <property type="evidence" value="ECO:0000316"/>
    <property type="project" value="MGI"/>
</dbReference>
<dbReference type="GO" id="GO:0003229">
    <property type="term" value="P:ventricular cardiac muscle tissue development"/>
    <property type="evidence" value="ECO:0000316"/>
    <property type="project" value="MGI"/>
</dbReference>
<dbReference type="GO" id="GO:0003281">
    <property type="term" value="P:ventricular septum development"/>
    <property type="evidence" value="ECO:0000315"/>
    <property type="project" value="BHF-UCL"/>
</dbReference>
<dbReference type="CDD" id="cd20189">
    <property type="entry name" value="T-box_TBX4_5-like"/>
    <property type="match status" value="1"/>
</dbReference>
<dbReference type="FunFam" id="2.60.40.820:FF:000005">
    <property type="entry name" value="T-box transcription factor TBX5"/>
    <property type="match status" value="1"/>
</dbReference>
<dbReference type="Gene3D" id="2.60.40.820">
    <property type="entry name" value="Transcription factor, T-box"/>
    <property type="match status" value="1"/>
</dbReference>
<dbReference type="InterPro" id="IPR008967">
    <property type="entry name" value="p53-like_TF_DNA-bd_sf"/>
</dbReference>
<dbReference type="InterPro" id="IPR046360">
    <property type="entry name" value="T-box_DNA-bd"/>
</dbReference>
<dbReference type="InterPro" id="IPR036960">
    <property type="entry name" value="T-box_sf"/>
</dbReference>
<dbReference type="InterPro" id="IPR001699">
    <property type="entry name" value="TF_T-box"/>
</dbReference>
<dbReference type="InterPro" id="IPR018186">
    <property type="entry name" value="TF_T-box_CS"/>
</dbReference>
<dbReference type="PANTHER" id="PTHR11267">
    <property type="entry name" value="T-BOX PROTEIN-RELATED"/>
    <property type="match status" value="1"/>
</dbReference>
<dbReference type="PANTHER" id="PTHR11267:SF28">
    <property type="entry name" value="T-BOX TRANSCRIPTION FACTOR TBX5"/>
    <property type="match status" value="1"/>
</dbReference>
<dbReference type="Pfam" id="PF00907">
    <property type="entry name" value="T-box"/>
    <property type="match status" value="1"/>
</dbReference>
<dbReference type="PRINTS" id="PR00937">
    <property type="entry name" value="TBOX"/>
</dbReference>
<dbReference type="SMART" id="SM00425">
    <property type="entry name" value="TBOX"/>
    <property type="match status" value="1"/>
</dbReference>
<dbReference type="SUPFAM" id="SSF49417">
    <property type="entry name" value="p53-like transcription factors"/>
    <property type="match status" value="1"/>
</dbReference>
<dbReference type="PROSITE" id="PS01283">
    <property type="entry name" value="TBOX_1"/>
    <property type="match status" value="1"/>
</dbReference>
<dbReference type="PROSITE" id="PS01264">
    <property type="entry name" value="TBOX_2"/>
    <property type="match status" value="1"/>
</dbReference>
<dbReference type="PROSITE" id="PS50252">
    <property type="entry name" value="TBOX_3"/>
    <property type="match status" value="1"/>
</dbReference>
<protein>
    <recommendedName>
        <fullName>T-box transcription factor TBX5</fullName>
        <shortName>T-box protein 5</shortName>
    </recommendedName>
</protein>
<sequence>MADTDEGFGLARTPLEPDSKDRSCDSKPESALGAPSKSPSSPQAAFTQQGMEGIKVFLHERELWLKFHEVGTEMIITKAGRRMFPSYKVKVTGLNPKTKYILLMDIVPADDHRYKFADNKWSVTGKAEPAMPGRLYVHPDSPATGAHWMRQLVSFQKLKLTNNHLDPFGHIILNSMHKYQPRLHIVKADENNGFGSKNTAFCTHVFPETAFIAVTSYQNHKITQLKIENNPFAKGFRGSDDLELHRMSRMQSKEYPVVPRSTVRHKVTSNHSPFSSETRALSTSSNLGSQYQCENGVSGPSQDLLPPPNPYPLAQEHSQIYHCTKRKDEECSSTEHPYKKPYMETSPSEEDTFYRSGYPQQQGLSTSYRTESAQRQACMYASSAPPSEPVPSLEDISCNTWPSMPSYSSCTVTTVQPMDRLPYQHFSAHFTSGPLVPRLAGMANHGSPQLGEGMFQHQTSVAHQPVVRQCGPQTGLQSPGGLQPPEFLYTHGVPRTLSPHQYHSVHGVGMVPEWSENS</sequence>
<comment type="function">
    <text evidence="1">DNA-binding protein that regulates the transcription of several genes and is involved in heart development and limb pattern formation. Binds to the core DNA motif of NPPA promoter.</text>
</comment>
<comment type="subunit">
    <text evidence="1">Monomer. Homodimer (via the T-box); binds DNA as homodimer. Interacts (via the T-box) with NKX2-5 (via the homeobox); this complex binds DNA. Interacts with GATA4. Interacts with KAT2A and KAT2B.</text>
</comment>
<comment type="interaction">
    <interactant intactId="EBI-8411807">
        <id>P70326</id>
    </interactant>
    <interactant intactId="EBI-3043852">
        <id>Q6PDQ2</id>
        <label>Chd4</label>
    </interactant>
    <organismsDiffer>false</organismsDiffer>
    <experiments>3</experiments>
</comment>
<comment type="interaction">
    <interactant intactId="EBI-8411807">
        <id>P70326</id>
    </interactant>
    <interactant intactId="EBI-8407880">
        <id>Q9JJZ6</id>
        <label>Klf13</label>
    </interactant>
    <organismsDiffer>false</organismsDiffer>
    <experiments>3</experiments>
</comment>
<comment type="interaction">
    <interactant intactId="EBI-8411807">
        <id>P70326</id>
    </interactant>
    <interactant intactId="EBI-372916">
        <id>Q14839</id>
        <label>CHD4</label>
    </interactant>
    <organismsDiffer>true</organismsDiffer>
    <experiments>3</experiments>
</comment>
<comment type="subcellular location">
    <subcellularLocation>
        <location evidence="1 2">Nucleus</location>
    </subcellularLocation>
    <subcellularLocation>
        <location evidence="1">Cytoplasm</location>
    </subcellularLocation>
    <text evidence="1">Shuttles between the cytoplasm and the nucleus. Acetylation at Lys-339 promotes nuclear retention.</text>
</comment>
<comment type="developmental stage">
    <text evidence="4">First expressed at day 7.5, exclusively in the allantois. At day 8.5, expressed only in the sinous venosus of the developing heart. At day 9.5, expression observed in the forelimb bud, optic vesicle and sinous venosus. By day 12.5, expression is limited to the retina, the body wall and the mesenchyme of the lung, of the mandible and of that surrounding the trachea.</text>
</comment>
<comment type="domain">
    <text evidence="1">The T-Box domain binds to double-stranded DNA.</text>
</comment>
<comment type="PTM">
    <text evidence="1">Acetylation at Lys-339 by KAT2A and KAT2B promotes nuclear retention.</text>
</comment>
<organism>
    <name type="scientific">Mus musculus</name>
    <name type="common">Mouse</name>
    <dbReference type="NCBI Taxonomy" id="10090"/>
    <lineage>
        <taxon>Eukaryota</taxon>
        <taxon>Metazoa</taxon>
        <taxon>Chordata</taxon>
        <taxon>Craniata</taxon>
        <taxon>Vertebrata</taxon>
        <taxon>Euteleostomi</taxon>
        <taxon>Mammalia</taxon>
        <taxon>Eutheria</taxon>
        <taxon>Euarchontoglires</taxon>
        <taxon>Glires</taxon>
        <taxon>Rodentia</taxon>
        <taxon>Myomorpha</taxon>
        <taxon>Muroidea</taxon>
        <taxon>Muridae</taxon>
        <taxon>Murinae</taxon>
        <taxon>Mus</taxon>
        <taxon>Mus</taxon>
    </lineage>
</organism>
<proteinExistence type="evidence at protein level"/>
<keyword id="KW-0002">3D-structure</keyword>
<keyword id="KW-0007">Acetylation</keyword>
<keyword id="KW-0963">Cytoplasm</keyword>
<keyword id="KW-0217">Developmental protein</keyword>
<keyword id="KW-0238">DNA-binding</keyword>
<keyword id="KW-0539">Nucleus</keyword>
<keyword id="KW-1185">Reference proteome</keyword>
<keyword id="KW-0804">Transcription</keyword>
<keyword id="KW-0805">Transcription regulation</keyword>